<protein>
    <recommendedName>
        <fullName evidence="1">GTPase Der</fullName>
    </recommendedName>
    <alternativeName>
        <fullName evidence="1">GTP-binding protein EngA</fullName>
    </alternativeName>
</protein>
<evidence type="ECO:0000255" key="1">
    <source>
        <dbReference type="HAMAP-Rule" id="MF_00195"/>
    </source>
</evidence>
<proteinExistence type="inferred from homology"/>
<sequence>MIPVIALVGRPNVGKSTLFNRLTHTRDALVADFPGLTRDRKYGRAEVEGHEFIVVDTGGIDGTEDGVETKMAGQSLLAIEEADIVLFMVDARAGLMPADQGIAQHLRSREKATFLVANKTDGIDPDTATADFYSLGLGEVHAIAASHGRGVTQLIEDVMAPYMDAEEPEVELTEEEENAAYWAEQEAQGEDVPPEDPEDDFDPRTLPIKLAIVGRPNVGKSTLTNRILGEDRVVVYDMPGTTRDSIYIPMTRDDREYILIDTAGVRKRGKITETVEKFSVIKTLQAIEDSNVVLLVIDARDGISDQDLSLLGFILNSGRSLVIAVNKWDGMTEEARAQVKDMLDLRLGFVDFARIHFISALHGSGVGNLFESVQEAYDCSTKRVGTSLLTRIMQMAEEDHQPPLVRGRRVKLKYAHAGGYNPPIVVIHGNQVTDLSDSYKRYLMNYFRRSLKVMGTPIRIQFKEGENPFAGKRNPLTPNQMRKRKRLMSHLKKGK</sequence>
<comment type="function">
    <text evidence="1">GTPase that plays an essential role in the late steps of ribosome biogenesis.</text>
</comment>
<comment type="subunit">
    <text evidence="1">Associates with the 50S ribosomal subunit.</text>
</comment>
<comment type="similarity">
    <text evidence="1">Belongs to the TRAFAC class TrmE-Era-EngA-EngB-Septin-like GTPase superfamily. EngA (Der) GTPase family.</text>
</comment>
<reference key="1">
    <citation type="submission" date="2007-02" db="EMBL/GenBank/DDBJ databases">
        <title>Complete sequence of chromosome of Yersinia pestis Pestoides F.</title>
        <authorList>
            <consortium name="US DOE Joint Genome Institute"/>
            <person name="Copeland A."/>
            <person name="Lucas S."/>
            <person name="Lapidus A."/>
            <person name="Barry K."/>
            <person name="Detter J.C."/>
            <person name="Glavina del Rio T."/>
            <person name="Hammon N."/>
            <person name="Israni S."/>
            <person name="Dalin E."/>
            <person name="Tice H."/>
            <person name="Pitluck S."/>
            <person name="Di Bartolo G."/>
            <person name="Chain P."/>
            <person name="Malfatti S."/>
            <person name="Shin M."/>
            <person name="Vergez L."/>
            <person name="Schmutz J."/>
            <person name="Larimer F."/>
            <person name="Land M."/>
            <person name="Hauser L."/>
            <person name="Worsham P."/>
            <person name="Chu M."/>
            <person name="Bearden S."/>
            <person name="Garcia E."/>
            <person name="Richardson P."/>
        </authorList>
    </citation>
    <scope>NUCLEOTIDE SEQUENCE [LARGE SCALE GENOMIC DNA]</scope>
    <source>
        <strain>Pestoides F</strain>
    </source>
</reference>
<gene>
    <name evidence="1" type="primary">der</name>
    <name type="synonym">engA</name>
    <name type="ordered locus">YPDSF_2220</name>
</gene>
<organism>
    <name type="scientific">Yersinia pestis (strain Pestoides F)</name>
    <dbReference type="NCBI Taxonomy" id="386656"/>
    <lineage>
        <taxon>Bacteria</taxon>
        <taxon>Pseudomonadati</taxon>
        <taxon>Pseudomonadota</taxon>
        <taxon>Gammaproteobacteria</taxon>
        <taxon>Enterobacterales</taxon>
        <taxon>Yersiniaceae</taxon>
        <taxon>Yersinia</taxon>
    </lineage>
</organism>
<name>DER_YERPP</name>
<feature type="chain" id="PRO_1000011788" description="GTPase Der">
    <location>
        <begin position="1"/>
        <end position="495"/>
    </location>
</feature>
<feature type="domain" description="EngA-type G 1">
    <location>
        <begin position="3"/>
        <end position="166"/>
    </location>
</feature>
<feature type="domain" description="EngA-type G 2">
    <location>
        <begin position="208"/>
        <end position="381"/>
    </location>
</feature>
<feature type="domain" description="KH-like" evidence="1">
    <location>
        <begin position="382"/>
        <end position="466"/>
    </location>
</feature>
<feature type="binding site" evidence="1">
    <location>
        <begin position="9"/>
        <end position="16"/>
    </location>
    <ligand>
        <name>GTP</name>
        <dbReference type="ChEBI" id="CHEBI:37565"/>
        <label>1</label>
    </ligand>
</feature>
<feature type="binding site" evidence="1">
    <location>
        <begin position="56"/>
        <end position="60"/>
    </location>
    <ligand>
        <name>GTP</name>
        <dbReference type="ChEBI" id="CHEBI:37565"/>
        <label>1</label>
    </ligand>
</feature>
<feature type="binding site" evidence="1">
    <location>
        <begin position="118"/>
        <end position="121"/>
    </location>
    <ligand>
        <name>GTP</name>
        <dbReference type="ChEBI" id="CHEBI:37565"/>
        <label>1</label>
    </ligand>
</feature>
<feature type="binding site" evidence="1">
    <location>
        <begin position="214"/>
        <end position="221"/>
    </location>
    <ligand>
        <name>GTP</name>
        <dbReference type="ChEBI" id="CHEBI:37565"/>
        <label>2</label>
    </ligand>
</feature>
<feature type="binding site" evidence="1">
    <location>
        <begin position="261"/>
        <end position="265"/>
    </location>
    <ligand>
        <name>GTP</name>
        <dbReference type="ChEBI" id="CHEBI:37565"/>
        <label>2</label>
    </ligand>
</feature>
<feature type="binding site" evidence="1">
    <location>
        <begin position="326"/>
        <end position="329"/>
    </location>
    <ligand>
        <name>GTP</name>
        <dbReference type="ChEBI" id="CHEBI:37565"/>
        <label>2</label>
    </ligand>
</feature>
<dbReference type="EMBL" id="CP000668">
    <property type="protein sequence ID" value="ABP40595.1"/>
    <property type="molecule type" value="Genomic_DNA"/>
</dbReference>
<dbReference type="RefSeq" id="WP_002209813.1">
    <property type="nucleotide sequence ID" value="NZ_CP009715.1"/>
</dbReference>
<dbReference type="SMR" id="A4TMT3"/>
<dbReference type="GeneID" id="57975832"/>
<dbReference type="KEGG" id="ypp:YPDSF_2220"/>
<dbReference type="PATRIC" id="fig|386656.14.peg.3708"/>
<dbReference type="GO" id="GO:0005525">
    <property type="term" value="F:GTP binding"/>
    <property type="evidence" value="ECO:0007669"/>
    <property type="project" value="UniProtKB-UniRule"/>
</dbReference>
<dbReference type="GO" id="GO:0043022">
    <property type="term" value="F:ribosome binding"/>
    <property type="evidence" value="ECO:0007669"/>
    <property type="project" value="TreeGrafter"/>
</dbReference>
<dbReference type="GO" id="GO:0042254">
    <property type="term" value="P:ribosome biogenesis"/>
    <property type="evidence" value="ECO:0007669"/>
    <property type="project" value="UniProtKB-KW"/>
</dbReference>
<dbReference type="CDD" id="cd01894">
    <property type="entry name" value="EngA1"/>
    <property type="match status" value="1"/>
</dbReference>
<dbReference type="CDD" id="cd01895">
    <property type="entry name" value="EngA2"/>
    <property type="match status" value="1"/>
</dbReference>
<dbReference type="FunFam" id="3.30.300.20:FF:000004">
    <property type="entry name" value="GTPase Der"/>
    <property type="match status" value="1"/>
</dbReference>
<dbReference type="FunFam" id="3.40.50.300:FF:000040">
    <property type="entry name" value="GTPase Der"/>
    <property type="match status" value="1"/>
</dbReference>
<dbReference type="FunFam" id="3.40.50.300:FF:000057">
    <property type="entry name" value="GTPase Der"/>
    <property type="match status" value="1"/>
</dbReference>
<dbReference type="Gene3D" id="3.30.300.20">
    <property type="match status" value="1"/>
</dbReference>
<dbReference type="Gene3D" id="3.40.50.300">
    <property type="entry name" value="P-loop containing nucleotide triphosphate hydrolases"/>
    <property type="match status" value="2"/>
</dbReference>
<dbReference type="HAMAP" id="MF_00195">
    <property type="entry name" value="GTPase_Der"/>
    <property type="match status" value="1"/>
</dbReference>
<dbReference type="InterPro" id="IPR031166">
    <property type="entry name" value="G_ENGA"/>
</dbReference>
<dbReference type="InterPro" id="IPR006073">
    <property type="entry name" value="GTP-bd"/>
</dbReference>
<dbReference type="InterPro" id="IPR016484">
    <property type="entry name" value="GTPase_Der"/>
</dbReference>
<dbReference type="InterPro" id="IPR032859">
    <property type="entry name" value="KH_dom-like"/>
</dbReference>
<dbReference type="InterPro" id="IPR015946">
    <property type="entry name" value="KH_dom-like_a/b"/>
</dbReference>
<dbReference type="InterPro" id="IPR027417">
    <property type="entry name" value="P-loop_NTPase"/>
</dbReference>
<dbReference type="InterPro" id="IPR005225">
    <property type="entry name" value="Small_GTP-bd"/>
</dbReference>
<dbReference type="NCBIfam" id="TIGR03594">
    <property type="entry name" value="GTPase_EngA"/>
    <property type="match status" value="1"/>
</dbReference>
<dbReference type="NCBIfam" id="TIGR00231">
    <property type="entry name" value="small_GTP"/>
    <property type="match status" value="2"/>
</dbReference>
<dbReference type="PANTHER" id="PTHR43834">
    <property type="entry name" value="GTPASE DER"/>
    <property type="match status" value="1"/>
</dbReference>
<dbReference type="PANTHER" id="PTHR43834:SF6">
    <property type="entry name" value="GTPASE DER"/>
    <property type="match status" value="1"/>
</dbReference>
<dbReference type="Pfam" id="PF14714">
    <property type="entry name" value="KH_dom-like"/>
    <property type="match status" value="1"/>
</dbReference>
<dbReference type="Pfam" id="PF01926">
    <property type="entry name" value="MMR_HSR1"/>
    <property type="match status" value="2"/>
</dbReference>
<dbReference type="PIRSF" id="PIRSF006485">
    <property type="entry name" value="GTP-binding_EngA"/>
    <property type="match status" value="1"/>
</dbReference>
<dbReference type="PRINTS" id="PR00326">
    <property type="entry name" value="GTP1OBG"/>
</dbReference>
<dbReference type="SUPFAM" id="SSF52540">
    <property type="entry name" value="P-loop containing nucleoside triphosphate hydrolases"/>
    <property type="match status" value="2"/>
</dbReference>
<dbReference type="PROSITE" id="PS51712">
    <property type="entry name" value="G_ENGA"/>
    <property type="match status" value="2"/>
</dbReference>
<accession>A4TMT3</accession>
<keyword id="KW-0342">GTP-binding</keyword>
<keyword id="KW-0547">Nucleotide-binding</keyword>
<keyword id="KW-0677">Repeat</keyword>
<keyword id="KW-0690">Ribosome biogenesis</keyword>